<accession>P51018</accession>
<accession>A5W4E4</accession>
<dbReference type="EC" id="4.1.3.39" evidence="1"/>
<dbReference type="EMBL" id="U09250">
    <property type="protein sequence ID" value="AAA61944.1"/>
    <property type="molecule type" value="Genomic_DNA"/>
</dbReference>
<dbReference type="EMBL" id="CP000712">
    <property type="protein sequence ID" value="ABQ79004.1"/>
    <property type="molecule type" value="Genomic_DNA"/>
</dbReference>
<dbReference type="SMR" id="P51018"/>
<dbReference type="KEGG" id="ppf:Pput_2873"/>
<dbReference type="eggNOG" id="COG0119">
    <property type="taxonomic scope" value="Bacteria"/>
</dbReference>
<dbReference type="HOGENOM" id="CLU_049173_0_0_6"/>
<dbReference type="BioCyc" id="MetaCyc:MONOMER-11384"/>
<dbReference type="UniPathway" id="UPA00273"/>
<dbReference type="GO" id="GO:0003852">
    <property type="term" value="F:2-isopropylmalate synthase activity"/>
    <property type="evidence" value="ECO:0007669"/>
    <property type="project" value="TreeGrafter"/>
</dbReference>
<dbReference type="GO" id="GO:0008701">
    <property type="term" value="F:4-hydroxy-2-oxovalerate aldolase activity"/>
    <property type="evidence" value="ECO:0007669"/>
    <property type="project" value="UniProtKB-UniRule"/>
</dbReference>
<dbReference type="GO" id="GO:0030145">
    <property type="term" value="F:manganese ion binding"/>
    <property type="evidence" value="ECO:0007669"/>
    <property type="project" value="UniProtKB-UniRule"/>
</dbReference>
<dbReference type="GO" id="GO:0009098">
    <property type="term" value="P:L-leucine biosynthetic process"/>
    <property type="evidence" value="ECO:0007669"/>
    <property type="project" value="TreeGrafter"/>
</dbReference>
<dbReference type="GO" id="GO:0042203">
    <property type="term" value="P:toluene catabolic process"/>
    <property type="evidence" value="ECO:0007669"/>
    <property type="project" value="UniProtKB-UniPathway"/>
</dbReference>
<dbReference type="CDD" id="cd07943">
    <property type="entry name" value="DRE_TIM_HOA"/>
    <property type="match status" value="1"/>
</dbReference>
<dbReference type="FunFam" id="1.10.8.60:FF:000042">
    <property type="entry name" value="4-hydroxy-2-oxovalerate aldolase"/>
    <property type="match status" value="1"/>
</dbReference>
<dbReference type="Gene3D" id="1.10.8.60">
    <property type="match status" value="1"/>
</dbReference>
<dbReference type="Gene3D" id="3.20.20.70">
    <property type="entry name" value="Aldolase class I"/>
    <property type="match status" value="1"/>
</dbReference>
<dbReference type="HAMAP" id="MF_01656">
    <property type="entry name" value="HOA"/>
    <property type="match status" value="1"/>
</dbReference>
<dbReference type="InterPro" id="IPR050073">
    <property type="entry name" value="2-IPM_HCS-like"/>
</dbReference>
<dbReference type="InterPro" id="IPR017629">
    <property type="entry name" value="4OH_2_O-val_aldolase"/>
</dbReference>
<dbReference type="InterPro" id="IPR013785">
    <property type="entry name" value="Aldolase_TIM"/>
</dbReference>
<dbReference type="InterPro" id="IPR012425">
    <property type="entry name" value="DmpG_comm"/>
</dbReference>
<dbReference type="InterPro" id="IPR035685">
    <property type="entry name" value="DRE_TIM_HOA"/>
</dbReference>
<dbReference type="InterPro" id="IPR000891">
    <property type="entry name" value="PYR_CT"/>
</dbReference>
<dbReference type="NCBIfam" id="TIGR03217">
    <property type="entry name" value="4OH_2_O_val_ald"/>
    <property type="match status" value="1"/>
</dbReference>
<dbReference type="NCBIfam" id="NF006049">
    <property type="entry name" value="PRK08195.1"/>
    <property type="match status" value="1"/>
</dbReference>
<dbReference type="PANTHER" id="PTHR10277:SF9">
    <property type="entry name" value="2-ISOPROPYLMALATE SYNTHASE 1, CHLOROPLASTIC-RELATED"/>
    <property type="match status" value="1"/>
</dbReference>
<dbReference type="PANTHER" id="PTHR10277">
    <property type="entry name" value="HOMOCITRATE SYNTHASE-RELATED"/>
    <property type="match status" value="1"/>
</dbReference>
<dbReference type="Pfam" id="PF07836">
    <property type="entry name" value="DmpG_comm"/>
    <property type="match status" value="1"/>
</dbReference>
<dbReference type="Pfam" id="PF00682">
    <property type="entry name" value="HMGL-like"/>
    <property type="match status" value="1"/>
</dbReference>
<dbReference type="SUPFAM" id="SSF51569">
    <property type="entry name" value="Aldolase"/>
    <property type="match status" value="1"/>
</dbReference>
<dbReference type="SUPFAM" id="SSF89000">
    <property type="entry name" value="post-HMGL domain-like"/>
    <property type="match status" value="1"/>
</dbReference>
<dbReference type="PROSITE" id="PS50991">
    <property type="entry name" value="PYR_CT"/>
    <property type="match status" value="1"/>
</dbReference>
<reference key="1">
    <citation type="journal article" date="1994" name="Gene">
        <title>Sequence and expression of the todGIH genes involved in the last three steps of toluene degradation by Pseudomonas putida F1.</title>
        <authorList>
            <person name="Lau P.C."/>
            <person name="Bergeron H."/>
            <person name="Labbe D."/>
            <person name="Wang Y."/>
            <person name="Brousseau R."/>
            <person name="Gibson D.T."/>
        </authorList>
    </citation>
    <scope>NUCLEOTIDE SEQUENCE [GENOMIC DNA]</scope>
</reference>
<reference key="2">
    <citation type="submission" date="2007-05" db="EMBL/GenBank/DDBJ databases">
        <title>Complete sequence of Pseudomonas putida F1.</title>
        <authorList>
            <consortium name="US DOE Joint Genome Institute"/>
            <person name="Copeland A."/>
            <person name="Lucas S."/>
            <person name="Lapidus A."/>
            <person name="Barry K."/>
            <person name="Detter J.C."/>
            <person name="Glavina del Rio T."/>
            <person name="Hammon N."/>
            <person name="Israni S."/>
            <person name="Dalin E."/>
            <person name="Tice H."/>
            <person name="Pitluck S."/>
            <person name="Chain P."/>
            <person name="Malfatti S."/>
            <person name="Shin M."/>
            <person name="Vergez L."/>
            <person name="Schmutz J."/>
            <person name="Larimer F."/>
            <person name="Land M."/>
            <person name="Hauser L."/>
            <person name="Kyrpides N."/>
            <person name="Lykidis A."/>
            <person name="Parales R."/>
            <person name="Richardson P."/>
        </authorList>
    </citation>
    <scope>NUCLEOTIDE SEQUENCE [LARGE SCALE GENOMIC DNA]</scope>
    <source>
        <strain>ATCC 700007 / DSM 6899 / JCM 31910 / BCRC 17059 / LMG 24140 / F1</strain>
    </source>
</reference>
<evidence type="ECO:0000255" key="1">
    <source>
        <dbReference type="HAMAP-Rule" id="MF_01656"/>
    </source>
</evidence>
<evidence type="ECO:0000305" key="2"/>
<organism>
    <name type="scientific">Pseudomonas putida (strain ATCC 700007 / DSM 6899 / JCM 31910 / BCRC 17059 / LMG 24140 / F1)</name>
    <dbReference type="NCBI Taxonomy" id="351746"/>
    <lineage>
        <taxon>Bacteria</taxon>
        <taxon>Pseudomonadati</taxon>
        <taxon>Pseudomonadota</taxon>
        <taxon>Gammaproteobacteria</taxon>
        <taxon>Pseudomonadales</taxon>
        <taxon>Pseudomonadaceae</taxon>
        <taxon>Pseudomonas</taxon>
    </lineage>
</organism>
<keyword id="KW-0058">Aromatic hydrocarbons catabolism</keyword>
<keyword id="KW-0456">Lyase</keyword>
<keyword id="KW-0464">Manganese</keyword>
<keyword id="KW-0479">Metal-binding</keyword>
<feature type="chain" id="PRO_0000072618" description="4-hydroxy-2-oxovalerate aldolase 1">
    <location>
        <begin position="1"/>
        <end position="352"/>
    </location>
</feature>
<feature type="domain" description="Pyruvate carboxyltransferase" evidence="1">
    <location>
        <begin position="6"/>
        <end position="258"/>
    </location>
</feature>
<feature type="active site" description="Proton acceptor" evidence="1">
    <location>
        <position position="18"/>
    </location>
</feature>
<feature type="binding site" evidence="1">
    <location>
        <begin position="14"/>
        <end position="15"/>
    </location>
    <ligand>
        <name>substrate</name>
    </ligand>
</feature>
<feature type="binding site" evidence="1">
    <location>
        <position position="15"/>
    </location>
    <ligand>
        <name>Mn(2+)</name>
        <dbReference type="ChEBI" id="CHEBI:29035"/>
    </ligand>
</feature>
<feature type="binding site" evidence="1">
    <location>
        <position position="168"/>
    </location>
    <ligand>
        <name>substrate</name>
    </ligand>
</feature>
<feature type="binding site" evidence="1">
    <location>
        <position position="197"/>
    </location>
    <ligand>
        <name>Mn(2+)</name>
        <dbReference type="ChEBI" id="CHEBI:29035"/>
    </ligand>
</feature>
<feature type="binding site" evidence="1">
    <location>
        <position position="197"/>
    </location>
    <ligand>
        <name>substrate</name>
    </ligand>
</feature>
<feature type="binding site" evidence="1">
    <location>
        <position position="199"/>
    </location>
    <ligand>
        <name>Mn(2+)</name>
        <dbReference type="ChEBI" id="CHEBI:29035"/>
    </ligand>
</feature>
<feature type="binding site" evidence="1">
    <location>
        <position position="288"/>
    </location>
    <ligand>
        <name>substrate</name>
    </ligand>
</feature>
<feature type="site" description="Transition state stabilizer" evidence="1">
    <location>
        <position position="14"/>
    </location>
</feature>
<feature type="sequence conflict" description="In Ref. 1; AAA61944." evidence="2" ref="1">
    <original>HT</original>
    <variation>QS</variation>
    <location>
        <begin position="64"/>
        <end position="65"/>
    </location>
</feature>
<feature type="sequence conflict" description="In Ref. 1; AAA61944." evidence="2" ref="1">
    <original>HA</original>
    <variation>AS</variation>
    <location>
        <begin position="79"/>
        <end position="80"/>
    </location>
</feature>
<feature type="sequence conflict" description="In Ref. 1; AAA61944." evidence="2" ref="1">
    <original>R</original>
    <variation>G</variation>
    <location>
        <position position="341"/>
    </location>
</feature>
<feature type="sequence conflict" description="In Ref. 1; AAA61944." evidence="2" ref="1">
    <original>S</original>
    <variation>T</variation>
    <location>
        <position position="349"/>
    </location>
</feature>
<protein>
    <recommendedName>
        <fullName evidence="1">4-hydroxy-2-oxovalerate aldolase 1</fullName>
        <shortName evidence="1">HOA 1</shortName>
        <ecNumber evidence="1">4.1.3.39</ecNumber>
    </recommendedName>
    <alternativeName>
        <fullName evidence="1">4-hydroxy-2-keto-pentanoic acid aldolase 1</fullName>
    </alternativeName>
    <alternativeName>
        <fullName evidence="1">4-hydroxy-2-oxopentanoate aldolase 1</fullName>
    </alternativeName>
</protein>
<name>HOA1_PSEP1</name>
<comment type="catalytic activity">
    <reaction evidence="1">
        <text>(S)-4-hydroxy-2-oxopentanoate = acetaldehyde + pyruvate</text>
        <dbReference type="Rhea" id="RHEA:22624"/>
        <dbReference type="ChEBI" id="CHEBI:15343"/>
        <dbReference type="ChEBI" id="CHEBI:15361"/>
        <dbReference type="ChEBI" id="CHEBI:73143"/>
        <dbReference type="EC" id="4.1.3.39"/>
    </reaction>
</comment>
<comment type="pathway">
    <text>Xenobiotic degradation; toluene degradation.</text>
</comment>
<comment type="similarity">
    <text evidence="1">Belongs to the 4-hydroxy-2-oxovalerate aldolase family.</text>
</comment>
<proteinExistence type="inferred from homology"/>
<sequence length="352" mass="38474">MTQQKLYISDVTLRDGSHAIRHQYTVEQVKQIARALDDAKVDSIEVAHGDGLQGGSFNYGFGAHTDLEWIEAAASVVKHAKIATLLLPGIGTVHDLKAVYEAGVRVVRVATHCTEADISRQHIEYARHLGMEAVGFLMMSHMTTPQHLAQQAKLMESYGATVCYVVDSGGALSMNDVRDRFRAFKDVLKPETQTGMHAHHNLSLGVANSIVAVENGCDRVDASLAGMGAGAGNAPLEVFIAAAERMGWNHGTDLYKLMDAADDLVRPLQDRPVRVDRETLALGYAGVYSSFLRHSEMAASKYGLKTVDILVELGRRRMVGGQEDMIIDVALDLLKQQEHERIRSEPVSSEAN</sequence>
<gene>
    <name type="primary">todH</name>
    <name type="ordered locus">Pput_2873</name>
</gene>